<sequence>MQDLSLEARLAELESRLAFQEITIEELNVTVTAHEMEMAKLRDHLRLLTEKLKASQPSNIASQAEETPPPHY</sequence>
<organism>
    <name type="scientific">Escherichia coli (strain K12)</name>
    <dbReference type="NCBI Taxonomy" id="83333"/>
    <lineage>
        <taxon>Bacteria</taxon>
        <taxon>Pseudomonadati</taxon>
        <taxon>Pseudomonadota</taxon>
        <taxon>Gammaproteobacteria</taxon>
        <taxon>Enterobacterales</taxon>
        <taxon>Enterobacteriaceae</taxon>
        <taxon>Escherichia</taxon>
    </lineage>
</organism>
<feature type="chain" id="PRO_0000209199" description="Protein SlyX">
    <location>
        <begin position="1"/>
        <end position="72"/>
    </location>
</feature>
<feature type="region of interest" description="Disordered" evidence="1">
    <location>
        <begin position="52"/>
        <end position="72"/>
    </location>
</feature>
<feature type="compositionally biased region" description="Polar residues" evidence="1">
    <location>
        <begin position="55"/>
        <end position="65"/>
    </location>
</feature>
<gene>
    <name type="primary">slyX</name>
    <name type="ordered locus">b3348</name>
    <name type="ordered locus">JW3310</name>
</gene>
<name>SLYX_ECOLI</name>
<comment type="similarity">
    <text evidence="2">Belongs to the SlyX family.</text>
</comment>
<evidence type="ECO:0000256" key="1">
    <source>
        <dbReference type="SAM" id="MobiDB-lite"/>
    </source>
</evidence>
<evidence type="ECO:0000305" key="2"/>
<proteinExistence type="inferred from homology"/>
<dbReference type="EMBL" id="L13261">
    <property type="protein sequence ID" value="AAA18573.1"/>
    <property type="molecule type" value="Unassigned_DNA"/>
</dbReference>
<dbReference type="EMBL" id="U18997">
    <property type="protein sequence ID" value="AAA58145.1"/>
    <property type="molecule type" value="Genomic_DNA"/>
</dbReference>
<dbReference type="EMBL" id="U00096">
    <property type="protein sequence ID" value="AAC76373.1"/>
    <property type="molecule type" value="Genomic_DNA"/>
</dbReference>
<dbReference type="EMBL" id="AP009048">
    <property type="protein sequence ID" value="BAE77943.1"/>
    <property type="molecule type" value="Genomic_DNA"/>
</dbReference>
<dbReference type="PIR" id="A49988">
    <property type="entry name" value="A49988"/>
</dbReference>
<dbReference type="RefSeq" id="NP_417807.1">
    <property type="nucleotide sequence ID" value="NC_000913.3"/>
</dbReference>
<dbReference type="RefSeq" id="WP_001153615.1">
    <property type="nucleotide sequence ID" value="NZ_SSZK01000008.1"/>
</dbReference>
<dbReference type="SMR" id="P0A8R4"/>
<dbReference type="BioGRID" id="4262472">
    <property type="interactions" value="66"/>
</dbReference>
<dbReference type="FunCoup" id="P0A8R4">
    <property type="interactions" value="15"/>
</dbReference>
<dbReference type="STRING" id="511145.b3348"/>
<dbReference type="jPOST" id="P0A8R4"/>
<dbReference type="PaxDb" id="511145-b3348"/>
<dbReference type="EnsemblBacteria" id="AAC76373">
    <property type="protein sequence ID" value="AAC76373"/>
    <property type="gene ID" value="b3348"/>
</dbReference>
<dbReference type="GeneID" id="947849"/>
<dbReference type="KEGG" id="ecj:JW3310"/>
<dbReference type="KEGG" id="eco:b3348"/>
<dbReference type="KEGG" id="ecoc:C3026_18180"/>
<dbReference type="PATRIC" id="fig|1411691.4.peg.3383"/>
<dbReference type="EchoBASE" id="EB1615"/>
<dbReference type="eggNOG" id="COG2900">
    <property type="taxonomic scope" value="Bacteria"/>
</dbReference>
<dbReference type="HOGENOM" id="CLU_180796_4_2_6"/>
<dbReference type="InParanoid" id="P0A8R4"/>
<dbReference type="OMA" id="CQLAFQE"/>
<dbReference type="OrthoDB" id="5771733at2"/>
<dbReference type="PhylomeDB" id="P0A8R4"/>
<dbReference type="BioCyc" id="EcoCyc:EG11664-MONOMER"/>
<dbReference type="PRO" id="PR:P0A8R4"/>
<dbReference type="Proteomes" id="UP000000625">
    <property type="component" value="Chromosome"/>
</dbReference>
<dbReference type="Gene3D" id="1.20.5.300">
    <property type="match status" value="1"/>
</dbReference>
<dbReference type="HAMAP" id="MF_00715">
    <property type="entry name" value="SlyX"/>
    <property type="match status" value="1"/>
</dbReference>
<dbReference type="InterPro" id="IPR007236">
    <property type="entry name" value="SlyX"/>
</dbReference>
<dbReference type="NCBIfam" id="NF002750">
    <property type="entry name" value="PRK02793.1"/>
    <property type="match status" value="1"/>
</dbReference>
<dbReference type="PANTHER" id="PTHR36508">
    <property type="entry name" value="PROTEIN SLYX"/>
    <property type="match status" value="1"/>
</dbReference>
<dbReference type="PANTHER" id="PTHR36508:SF1">
    <property type="entry name" value="PROTEIN SLYX"/>
    <property type="match status" value="1"/>
</dbReference>
<dbReference type="Pfam" id="PF04102">
    <property type="entry name" value="SlyX"/>
    <property type="match status" value="1"/>
</dbReference>
<accession>P0A8R4</accession>
<accession>P30857</accession>
<accession>Q2M713</accession>
<protein>
    <recommendedName>
        <fullName>Protein SlyX</fullName>
    </recommendedName>
</protein>
<reference key="1">
    <citation type="journal article" date="1994" name="J. Biol. Chem.">
        <title>slyD, a host gene required for phi X174 lysis, is related to the FK506-binding protein family of peptidyl-prolyl cis-trans-isomerases.</title>
        <authorList>
            <person name="Roof W.D."/>
            <person name="Horne S.M."/>
            <person name="Young K.D."/>
            <person name="Young R."/>
        </authorList>
    </citation>
    <scope>NUCLEOTIDE SEQUENCE [GENOMIC DNA]</scope>
    <source>
        <strain>K12 / CS109</strain>
    </source>
</reference>
<reference key="2">
    <citation type="journal article" date="1997" name="Science">
        <title>The complete genome sequence of Escherichia coli K-12.</title>
        <authorList>
            <person name="Blattner F.R."/>
            <person name="Plunkett G. III"/>
            <person name="Bloch C.A."/>
            <person name="Perna N.T."/>
            <person name="Burland V."/>
            <person name="Riley M."/>
            <person name="Collado-Vides J."/>
            <person name="Glasner J.D."/>
            <person name="Rode C.K."/>
            <person name="Mayhew G.F."/>
            <person name="Gregor J."/>
            <person name="Davis N.W."/>
            <person name="Kirkpatrick H.A."/>
            <person name="Goeden M.A."/>
            <person name="Rose D.J."/>
            <person name="Mau B."/>
            <person name="Shao Y."/>
        </authorList>
    </citation>
    <scope>NUCLEOTIDE SEQUENCE [LARGE SCALE GENOMIC DNA]</scope>
    <source>
        <strain>K12 / MG1655 / ATCC 47076</strain>
    </source>
</reference>
<reference key="3">
    <citation type="journal article" date="2006" name="Mol. Syst. Biol.">
        <title>Highly accurate genome sequences of Escherichia coli K-12 strains MG1655 and W3110.</title>
        <authorList>
            <person name="Hayashi K."/>
            <person name="Morooka N."/>
            <person name="Yamamoto Y."/>
            <person name="Fujita K."/>
            <person name="Isono K."/>
            <person name="Choi S."/>
            <person name="Ohtsubo E."/>
            <person name="Baba T."/>
            <person name="Wanner B.L."/>
            <person name="Mori H."/>
            <person name="Horiuchi T."/>
        </authorList>
    </citation>
    <scope>NUCLEOTIDE SEQUENCE [LARGE SCALE GENOMIC DNA]</scope>
    <source>
        <strain>K12 / W3110 / ATCC 27325 / DSM 5911</strain>
    </source>
</reference>
<keyword id="KW-1185">Reference proteome</keyword>